<evidence type="ECO:0000255" key="1">
    <source>
        <dbReference type="HAMAP-Rule" id="MF_00199"/>
    </source>
</evidence>
<comment type="function">
    <text evidence="1">Hydrolyzes diadenosine 5',5'''-P1,P4-tetraphosphate to yield ADP.</text>
</comment>
<comment type="catalytic activity">
    <reaction evidence="1">
        <text>P(1),P(4)-bis(5'-adenosyl) tetraphosphate + H2O = 2 ADP + 2 H(+)</text>
        <dbReference type="Rhea" id="RHEA:24252"/>
        <dbReference type="ChEBI" id="CHEBI:15377"/>
        <dbReference type="ChEBI" id="CHEBI:15378"/>
        <dbReference type="ChEBI" id="CHEBI:58141"/>
        <dbReference type="ChEBI" id="CHEBI:456216"/>
        <dbReference type="EC" id="3.6.1.41"/>
    </reaction>
</comment>
<comment type="similarity">
    <text evidence="1">Belongs to the Ap4A hydrolase family.</text>
</comment>
<sequence length="282" mass="31608">MSTYLIGDVHGCYDELIALLAQVEFDPRRDTLWLTGDLVARGPGSLEVLRYVKSLGDSVRLVLGNHDLHLLAVFAGISRNKPKDRLKPLLEAPDADELLNWLRRQPLLQVDEEKKLVMAHAGITPQWDLETAQQCARDVEAVLSSDSYPFFLDAMYGDMPNHWSNELSGLARLRFISNAFTRMRYCFPNGQLDMYSKEAPEDAPAPLKPWFAIPGPVSNAYSIAFGHWASLEGRGTPEGIYALDTGCCWGGELTCLRWEDKQYFTQPSNRQKSLDEGEAVAS</sequence>
<keyword id="KW-0378">Hydrolase</keyword>
<name>APAH_KLEP7</name>
<accession>A6T4I5</accession>
<feature type="chain" id="PRO_1000012067" description="Bis(5'-nucleosyl)-tetraphosphatase, symmetrical">
    <location>
        <begin position="1"/>
        <end position="282"/>
    </location>
</feature>
<protein>
    <recommendedName>
        <fullName evidence="1">Bis(5'-nucleosyl)-tetraphosphatase, symmetrical</fullName>
        <ecNumber evidence="1">3.6.1.41</ecNumber>
    </recommendedName>
    <alternativeName>
        <fullName evidence="1">Ap4A hydrolase</fullName>
    </alternativeName>
    <alternativeName>
        <fullName evidence="1">Diadenosine 5',5'''-P1,P4-tetraphosphate pyrophosphohydrolase</fullName>
    </alternativeName>
    <alternativeName>
        <fullName evidence="1">Diadenosine tetraphosphatase</fullName>
    </alternativeName>
</protein>
<dbReference type="EC" id="3.6.1.41" evidence="1"/>
<dbReference type="EMBL" id="CP000647">
    <property type="protein sequence ID" value="ABR75506.1"/>
    <property type="molecule type" value="Genomic_DNA"/>
</dbReference>
<dbReference type="RefSeq" id="WP_002888321.1">
    <property type="nucleotide sequence ID" value="NC_009648.1"/>
</dbReference>
<dbReference type="SMR" id="A6T4I5"/>
<dbReference type="STRING" id="272620.KPN_00046"/>
<dbReference type="PaxDb" id="272620-KPN_00046"/>
<dbReference type="EnsemblBacteria" id="ABR75506">
    <property type="protein sequence ID" value="ABR75506"/>
    <property type="gene ID" value="KPN_00046"/>
</dbReference>
<dbReference type="KEGG" id="kpn:KPN_00046"/>
<dbReference type="HOGENOM" id="CLU_056184_2_0_6"/>
<dbReference type="Proteomes" id="UP000000265">
    <property type="component" value="Chromosome"/>
</dbReference>
<dbReference type="GO" id="GO:0008803">
    <property type="term" value="F:bis(5'-nucleosyl)-tetraphosphatase (symmetrical) activity"/>
    <property type="evidence" value="ECO:0007669"/>
    <property type="project" value="UniProtKB-UniRule"/>
</dbReference>
<dbReference type="CDD" id="cd07422">
    <property type="entry name" value="MPP_ApaH"/>
    <property type="match status" value="1"/>
</dbReference>
<dbReference type="FunFam" id="3.60.21.10:FF:000013">
    <property type="entry name" value="Bis(5'-nucleosyl)-tetraphosphatase, symmetrical"/>
    <property type="match status" value="1"/>
</dbReference>
<dbReference type="Gene3D" id="3.60.21.10">
    <property type="match status" value="1"/>
</dbReference>
<dbReference type="HAMAP" id="MF_00199">
    <property type="entry name" value="ApaH"/>
    <property type="match status" value="1"/>
</dbReference>
<dbReference type="InterPro" id="IPR004617">
    <property type="entry name" value="ApaH"/>
</dbReference>
<dbReference type="InterPro" id="IPR004843">
    <property type="entry name" value="Calcineurin-like_PHP_ApaH"/>
</dbReference>
<dbReference type="InterPro" id="IPR029052">
    <property type="entry name" value="Metallo-depent_PP-like"/>
</dbReference>
<dbReference type="NCBIfam" id="TIGR00668">
    <property type="entry name" value="apaH"/>
    <property type="match status" value="1"/>
</dbReference>
<dbReference type="NCBIfam" id="NF001204">
    <property type="entry name" value="PRK00166.1"/>
    <property type="match status" value="1"/>
</dbReference>
<dbReference type="PANTHER" id="PTHR40942">
    <property type="match status" value="1"/>
</dbReference>
<dbReference type="PANTHER" id="PTHR40942:SF4">
    <property type="entry name" value="CYTOCHROME C5"/>
    <property type="match status" value="1"/>
</dbReference>
<dbReference type="Pfam" id="PF00149">
    <property type="entry name" value="Metallophos"/>
    <property type="match status" value="1"/>
</dbReference>
<dbReference type="PIRSF" id="PIRSF000903">
    <property type="entry name" value="B5n-ttraPtase_sm"/>
    <property type="match status" value="1"/>
</dbReference>
<dbReference type="SUPFAM" id="SSF56300">
    <property type="entry name" value="Metallo-dependent phosphatases"/>
    <property type="match status" value="1"/>
</dbReference>
<gene>
    <name evidence="1" type="primary">apaH</name>
    <name type="ordered locus">KPN78578_00450</name>
    <name type="ORF">KPN_00046</name>
</gene>
<reference key="1">
    <citation type="submission" date="2006-09" db="EMBL/GenBank/DDBJ databases">
        <authorList>
            <consortium name="The Klebsiella pneumonia Genome Sequencing Project"/>
            <person name="McClelland M."/>
            <person name="Sanderson E.K."/>
            <person name="Spieth J."/>
            <person name="Clifton W.S."/>
            <person name="Latreille P."/>
            <person name="Sabo A."/>
            <person name="Pepin K."/>
            <person name="Bhonagiri V."/>
            <person name="Porwollik S."/>
            <person name="Ali J."/>
            <person name="Wilson R.K."/>
        </authorList>
    </citation>
    <scope>NUCLEOTIDE SEQUENCE [LARGE SCALE GENOMIC DNA]</scope>
    <source>
        <strain>ATCC 700721 / MGH 78578</strain>
    </source>
</reference>
<organism>
    <name type="scientific">Klebsiella pneumoniae subsp. pneumoniae (strain ATCC 700721 / MGH 78578)</name>
    <dbReference type="NCBI Taxonomy" id="272620"/>
    <lineage>
        <taxon>Bacteria</taxon>
        <taxon>Pseudomonadati</taxon>
        <taxon>Pseudomonadota</taxon>
        <taxon>Gammaproteobacteria</taxon>
        <taxon>Enterobacterales</taxon>
        <taxon>Enterobacteriaceae</taxon>
        <taxon>Klebsiella/Raoultella group</taxon>
        <taxon>Klebsiella</taxon>
        <taxon>Klebsiella pneumoniae complex</taxon>
    </lineage>
</organism>
<proteinExistence type="inferred from homology"/>